<accession>A3P0Z1</accession>
<reference key="1">
    <citation type="journal article" date="2010" name="Genome Biol. Evol.">
        <title>Continuing evolution of Burkholderia mallei through genome reduction and large-scale rearrangements.</title>
        <authorList>
            <person name="Losada L."/>
            <person name="Ronning C.M."/>
            <person name="DeShazer D."/>
            <person name="Woods D."/>
            <person name="Fedorova N."/>
            <person name="Kim H.S."/>
            <person name="Shabalina S.A."/>
            <person name="Pearson T.R."/>
            <person name="Brinkac L."/>
            <person name="Tan P."/>
            <person name="Nandi T."/>
            <person name="Crabtree J."/>
            <person name="Badger J."/>
            <person name="Beckstrom-Sternberg S."/>
            <person name="Saqib M."/>
            <person name="Schutzer S.E."/>
            <person name="Keim P."/>
            <person name="Nierman W.C."/>
        </authorList>
    </citation>
    <scope>NUCLEOTIDE SEQUENCE [LARGE SCALE GENOMIC DNA]</scope>
    <source>
        <strain>1106a</strain>
    </source>
</reference>
<name>ATPG_BURP0</name>
<evidence type="ECO:0000255" key="1">
    <source>
        <dbReference type="HAMAP-Rule" id="MF_00815"/>
    </source>
</evidence>
<feature type="chain" id="PRO_1000053172" description="ATP synthase gamma chain">
    <location>
        <begin position="1"/>
        <end position="291"/>
    </location>
</feature>
<gene>
    <name evidence="1" type="primary">atpG</name>
    <name type="ordered locus">BURPS1106A_4043</name>
</gene>
<sequence>MAGMKEIRGKIKSVQNTRKITKAMEMVAASKMRRAQERMRAARPYAEKVRAIAAHMSRANPEYRHPFMVANDGVKTAGMILVTTDKGLCGGLNTNVLRASLQKFKELEEQGQKVEATAIGGKGLGFLNRFGAKVISQVVHLGDTPHLDKLIGAVKTQLDLYSEGKLSAVYLAYTRFVNTMKQETVIEQLLPLSSEHFDTNDGTPATSWDYIYEPDAQAVVDELLVRYVEALVYQAVAENMASEQSARMVAMKAASDNAKTVISELQLSYNKSRQAAITKELSEIVGGAAAV</sequence>
<proteinExistence type="inferred from homology"/>
<comment type="function">
    <text evidence="1">Produces ATP from ADP in the presence of a proton gradient across the membrane. The gamma chain is believed to be important in regulating ATPase activity and the flow of protons through the CF(0) complex.</text>
</comment>
<comment type="subunit">
    <text evidence="1">F-type ATPases have 2 components, CF(1) - the catalytic core - and CF(0) - the membrane proton channel. CF(1) has five subunits: alpha(3), beta(3), gamma(1), delta(1), epsilon(1). CF(0) has three main subunits: a, b and c.</text>
</comment>
<comment type="subcellular location">
    <subcellularLocation>
        <location evidence="1">Cell inner membrane</location>
        <topology evidence="1">Peripheral membrane protein</topology>
    </subcellularLocation>
</comment>
<comment type="similarity">
    <text evidence="1">Belongs to the ATPase gamma chain family.</text>
</comment>
<organism>
    <name type="scientific">Burkholderia pseudomallei (strain 1106a)</name>
    <dbReference type="NCBI Taxonomy" id="357348"/>
    <lineage>
        <taxon>Bacteria</taxon>
        <taxon>Pseudomonadati</taxon>
        <taxon>Pseudomonadota</taxon>
        <taxon>Betaproteobacteria</taxon>
        <taxon>Burkholderiales</taxon>
        <taxon>Burkholderiaceae</taxon>
        <taxon>Burkholderia</taxon>
        <taxon>pseudomallei group</taxon>
    </lineage>
</organism>
<keyword id="KW-0066">ATP synthesis</keyword>
<keyword id="KW-0997">Cell inner membrane</keyword>
<keyword id="KW-1003">Cell membrane</keyword>
<keyword id="KW-0139">CF(1)</keyword>
<keyword id="KW-0375">Hydrogen ion transport</keyword>
<keyword id="KW-0406">Ion transport</keyword>
<keyword id="KW-0472">Membrane</keyword>
<keyword id="KW-0813">Transport</keyword>
<dbReference type="EMBL" id="CP000572">
    <property type="protein sequence ID" value="ABN91000.1"/>
    <property type="molecule type" value="Genomic_DNA"/>
</dbReference>
<dbReference type="RefSeq" id="WP_004530461.1">
    <property type="nucleotide sequence ID" value="NC_009076.1"/>
</dbReference>
<dbReference type="SMR" id="A3P0Z1"/>
<dbReference type="GeneID" id="93062025"/>
<dbReference type="KEGG" id="bpl:BURPS1106A_4043"/>
<dbReference type="HOGENOM" id="CLU_050669_0_1_4"/>
<dbReference type="Proteomes" id="UP000006738">
    <property type="component" value="Chromosome I"/>
</dbReference>
<dbReference type="GO" id="GO:0005886">
    <property type="term" value="C:plasma membrane"/>
    <property type="evidence" value="ECO:0007669"/>
    <property type="project" value="UniProtKB-SubCell"/>
</dbReference>
<dbReference type="GO" id="GO:0045259">
    <property type="term" value="C:proton-transporting ATP synthase complex"/>
    <property type="evidence" value="ECO:0007669"/>
    <property type="project" value="UniProtKB-KW"/>
</dbReference>
<dbReference type="GO" id="GO:0005524">
    <property type="term" value="F:ATP binding"/>
    <property type="evidence" value="ECO:0007669"/>
    <property type="project" value="UniProtKB-UniRule"/>
</dbReference>
<dbReference type="GO" id="GO:0046933">
    <property type="term" value="F:proton-transporting ATP synthase activity, rotational mechanism"/>
    <property type="evidence" value="ECO:0007669"/>
    <property type="project" value="UniProtKB-UniRule"/>
</dbReference>
<dbReference type="GO" id="GO:0042777">
    <property type="term" value="P:proton motive force-driven plasma membrane ATP synthesis"/>
    <property type="evidence" value="ECO:0007669"/>
    <property type="project" value="UniProtKB-UniRule"/>
</dbReference>
<dbReference type="CDD" id="cd12151">
    <property type="entry name" value="F1-ATPase_gamma"/>
    <property type="match status" value="1"/>
</dbReference>
<dbReference type="FunFam" id="1.10.287.80:FF:000005">
    <property type="entry name" value="ATP synthase gamma chain"/>
    <property type="match status" value="1"/>
</dbReference>
<dbReference type="Gene3D" id="3.40.1380.10">
    <property type="match status" value="1"/>
</dbReference>
<dbReference type="Gene3D" id="1.10.287.80">
    <property type="entry name" value="ATP synthase, gamma subunit, helix hairpin domain"/>
    <property type="match status" value="1"/>
</dbReference>
<dbReference type="HAMAP" id="MF_00815">
    <property type="entry name" value="ATP_synth_gamma_bact"/>
    <property type="match status" value="1"/>
</dbReference>
<dbReference type="InterPro" id="IPR035968">
    <property type="entry name" value="ATP_synth_F1_ATPase_gsu"/>
</dbReference>
<dbReference type="InterPro" id="IPR000131">
    <property type="entry name" value="ATP_synth_F1_gsu"/>
</dbReference>
<dbReference type="InterPro" id="IPR023632">
    <property type="entry name" value="ATP_synth_F1_gsu_CS"/>
</dbReference>
<dbReference type="NCBIfam" id="TIGR01146">
    <property type="entry name" value="ATPsyn_F1gamma"/>
    <property type="match status" value="1"/>
</dbReference>
<dbReference type="NCBIfam" id="NF004144">
    <property type="entry name" value="PRK05621.1-1"/>
    <property type="match status" value="1"/>
</dbReference>
<dbReference type="PANTHER" id="PTHR11693">
    <property type="entry name" value="ATP SYNTHASE GAMMA CHAIN"/>
    <property type="match status" value="1"/>
</dbReference>
<dbReference type="PANTHER" id="PTHR11693:SF22">
    <property type="entry name" value="ATP SYNTHASE SUBUNIT GAMMA, MITOCHONDRIAL"/>
    <property type="match status" value="1"/>
</dbReference>
<dbReference type="Pfam" id="PF00231">
    <property type="entry name" value="ATP-synt"/>
    <property type="match status" value="1"/>
</dbReference>
<dbReference type="PRINTS" id="PR00126">
    <property type="entry name" value="ATPASEGAMMA"/>
</dbReference>
<dbReference type="SUPFAM" id="SSF52943">
    <property type="entry name" value="ATP synthase (F1-ATPase), gamma subunit"/>
    <property type="match status" value="1"/>
</dbReference>
<dbReference type="PROSITE" id="PS00153">
    <property type="entry name" value="ATPASE_GAMMA"/>
    <property type="match status" value="1"/>
</dbReference>
<protein>
    <recommendedName>
        <fullName evidence="1">ATP synthase gamma chain</fullName>
    </recommendedName>
    <alternativeName>
        <fullName evidence="1">ATP synthase F1 sector gamma subunit</fullName>
    </alternativeName>
    <alternativeName>
        <fullName evidence="1">F-ATPase gamma subunit</fullName>
    </alternativeName>
</protein>